<keyword id="KW-1185">Reference proteome</keyword>
<comment type="similarity">
    <text evidence="1">To T.pallidum TP_0315, TP_0618 and TP_0619.</text>
</comment>
<feature type="chain" id="PRO_0000202193" description="Uncharacterized protein TP_0127">
    <location>
        <begin position="1"/>
        <end position="229"/>
    </location>
</feature>
<sequence>MLGWGMDMSKSVMLCCLLSVQPCYAGYVFVSPKLGVYGEALGGPDTVGKAVKQADGTKIAPKIWYYAPRTPLFGVDIGYQADNGLLFRVNLDAALTRLMFRSQCVVGYSLRFGWGGGYVSIASGIECSATVDDAQYEPYTKNEQGTTVASNTVFPCTVLEALVRDPALTADYLLYGMQSCYAIPLHVGVSYYLAKRWGIECALTASLGISMRTDVRVPYAVRIGPVFRV</sequence>
<accession>O83164</accession>
<dbReference type="EMBL" id="AE000520">
    <property type="protein sequence ID" value="AAC65119.1"/>
    <property type="molecule type" value="Genomic_DNA"/>
</dbReference>
<dbReference type="PIR" id="D71362">
    <property type="entry name" value="D71362"/>
</dbReference>
<dbReference type="IntAct" id="O83164">
    <property type="interactions" value="1"/>
</dbReference>
<dbReference type="STRING" id="243276.TP_0127"/>
<dbReference type="EnsemblBacteria" id="AAC65119">
    <property type="protein sequence ID" value="AAC65119"/>
    <property type="gene ID" value="TP_0127"/>
</dbReference>
<dbReference type="KEGG" id="tpa:TP_0127"/>
<dbReference type="HOGENOM" id="CLU_091716_0_0_12"/>
<dbReference type="Proteomes" id="UP000000811">
    <property type="component" value="Chromosome"/>
</dbReference>
<dbReference type="InterPro" id="IPR024471">
    <property type="entry name" value="DUF2715"/>
</dbReference>
<dbReference type="Pfam" id="PF10895">
    <property type="entry name" value="DUF2715"/>
    <property type="match status" value="1"/>
</dbReference>
<protein>
    <recommendedName>
        <fullName>Uncharacterized protein TP_0127</fullName>
    </recommendedName>
</protein>
<gene>
    <name type="ordered locus">TP_0127</name>
</gene>
<organism>
    <name type="scientific">Treponema pallidum (strain Nichols)</name>
    <dbReference type="NCBI Taxonomy" id="243276"/>
    <lineage>
        <taxon>Bacteria</taxon>
        <taxon>Pseudomonadati</taxon>
        <taxon>Spirochaetota</taxon>
        <taxon>Spirochaetia</taxon>
        <taxon>Spirochaetales</taxon>
        <taxon>Treponemataceae</taxon>
        <taxon>Treponema</taxon>
    </lineage>
</organism>
<reference key="1">
    <citation type="journal article" date="1998" name="Science">
        <title>Complete genome sequence of Treponema pallidum, the syphilis spirochete.</title>
        <authorList>
            <person name="Fraser C.M."/>
            <person name="Norris S.J."/>
            <person name="Weinstock G.M."/>
            <person name="White O."/>
            <person name="Sutton G.G."/>
            <person name="Dodson R.J."/>
            <person name="Gwinn M.L."/>
            <person name="Hickey E.K."/>
            <person name="Clayton R.A."/>
            <person name="Ketchum K.A."/>
            <person name="Sodergren E."/>
            <person name="Hardham J.M."/>
            <person name="McLeod M.P."/>
            <person name="Salzberg S.L."/>
            <person name="Peterson J.D."/>
            <person name="Khalak H.G."/>
            <person name="Richardson D.L."/>
            <person name="Howell J.K."/>
            <person name="Chidambaram M."/>
            <person name="Utterback T.R."/>
            <person name="McDonald L.A."/>
            <person name="Artiach P."/>
            <person name="Bowman C."/>
            <person name="Cotton M.D."/>
            <person name="Fujii C."/>
            <person name="Garland S.A."/>
            <person name="Hatch B."/>
            <person name="Horst K."/>
            <person name="Roberts K.M."/>
            <person name="Sandusky M."/>
            <person name="Weidman J.F."/>
            <person name="Smith H.O."/>
            <person name="Venter J.C."/>
        </authorList>
    </citation>
    <scope>NUCLEOTIDE SEQUENCE [LARGE SCALE GENOMIC DNA]</scope>
    <source>
        <strain>Nichols</strain>
    </source>
</reference>
<proteinExistence type="predicted"/>
<name>Y127_TREPA</name>
<evidence type="ECO:0000305" key="1"/>